<name>CALF_PENDC</name>
<keyword id="KW-0274">FAD</keyword>
<keyword id="KW-0285">Flavoprotein</keyword>
<keyword id="KW-0325">Glycoprotein</keyword>
<keyword id="KW-0413">Isomerase</keyword>
<keyword id="KW-0560">Oxidoreductase</keyword>
<keyword id="KW-1185">Reference proteome</keyword>
<keyword id="KW-0732">Signal</keyword>
<accession>A0A1V6PBT1</accession>
<sequence>MSFKPLLLSLSLLSPALGVAPRQSASCRAIPGDPEWPSTSAWNALNNTVHGRLKATVPLPSVCHHEPFGTYNEDACTALKTEWLDDRTFLNNAAEVMNPGTQNYSCVPFTSPSQPCQLGNYASYSINVTGADDVIAGIRFARQKNIRLVIKNTGHDFAGKSTGTGALSLWTHHLNTTEIISSYESAEYTGPAAKLGAGVISGNVYQVVAEAGYRVMGGTCPTVGLAGGYTSGAGHSLLNGAYGMAADAVLEWEVVTAQGEHLIASQSNNTDLYWALSGGGPGTFAVVLSMTTKVFQDGPIGSGIMLFNLTSDNTEEYWGAIEDLWAFLPEFVDAGPNTWDFALTSTGFQAYAITVPDQNGTQVKSLLQPWLDSIEKRGIQYSYTPTDSPNYLQYFSSRFGPGIAGAGPATVQLASRLIPRAAMYNATQKKVIVSALRAFIEDGEDLELGCHALNVGNIEHPGNAVLPAWRNAIATCNVVNYWDWNITATEMQARKDLLVDRLIPGLEEATPGSGTYLNEIDARWKGDWITELYGDNYDRLLQIKNKYDPEHRFYAWTAVGSDSWFTDGSGRLCRV</sequence>
<evidence type="ECO:0000255" key="1"/>
<evidence type="ECO:0000255" key="2">
    <source>
        <dbReference type="PROSITE-ProRule" id="PRU00498"/>
    </source>
</evidence>
<evidence type="ECO:0000255" key="3">
    <source>
        <dbReference type="PROSITE-ProRule" id="PRU00718"/>
    </source>
</evidence>
<evidence type="ECO:0000269" key="4">
    <source>
    </source>
</evidence>
<evidence type="ECO:0000269" key="5">
    <source>
    </source>
</evidence>
<evidence type="ECO:0000269" key="6">
    <source>
    </source>
</evidence>
<evidence type="ECO:0000303" key="7">
    <source>
    </source>
</evidence>
<evidence type="ECO:0000305" key="8"/>
<evidence type="ECO:0000305" key="9">
    <source>
    </source>
</evidence>
<organism>
    <name type="scientific">Penicillium decumbens</name>
    <dbReference type="NCBI Taxonomy" id="69771"/>
    <lineage>
        <taxon>Eukaryota</taxon>
        <taxon>Fungi</taxon>
        <taxon>Dikarya</taxon>
        <taxon>Ascomycota</taxon>
        <taxon>Pezizomycotina</taxon>
        <taxon>Eurotiomycetes</taxon>
        <taxon>Eurotiomycetidae</taxon>
        <taxon>Eurotiales</taxon>
        <taxon>Aspergillaceae</taxon>
        <taxon>Penicillium</taxon>
    </lineage>
</organism>
<proteinExistence type="evidence at protein level"/>
<dbReference type="EC" id="1.1.3.-" evidence="9"/>
<dbReference type="EC" id="5.5.1.-" evidence="9"/>
<dbReference type="EMBL" id="MDYL01000013">
    <property type="protein sequence ID" value="OQD73976.1"/>
    <property type="molecule type" value="Genomic_DNA"/>
</dbReference>
<dbReference type="SMR" id="A0A1V6PBT1"/>
<dbReference type="STRING" id="69771.A0A1V6PBT1"/>
<dbReference type="GlyCosmos" id="A0A1V6PBT1">
    <property type="glycosylation" value="9 sites, No reported glycans"/>
</dbReference>
<dbReference type="OMA" id="WRSAIAI"/>
<dbReference type="OrthoDB" id="9983560at2759"/>
<dbReference type="Proteomes" id="UP000191522">
    <property type="component" value="Unassembled WGS sequence"/>
</dbReference>
<dbReference type="GO" id="GO:0071949">
    <property type="term" value="F:FAD binding"/>
    <property type="evidence" value="ECO:0007669"/>
    <property type="project" value="InterPro"/>
</dbReference>
<dbReference type="GO" id="GO:0016853">
    <property type="term" value="F:isomerase activity"/>
    <property type="evidence" value="ECO:0007669"/>
    <property type="project" value="UniProtKB-KW"/>
</dbReference>
<dbReference type="GO" id="GO:0016491">
    <property type="term" value="F:oxidoreductase activity"/>
    <property type="evidence" value="ECO:0007669"/>
    <property type="project" value="UniProtKB-KW"/>
</dbReference>
<dbReference type="Gene3D" id="3.30.465.10">
    <property type="match status" value="2"/>
</dbReference>
<dbReference type="InterPro" id="IPR012951">
    <property type="entry name" value="BBE"/>
</dbReference>
<dbReference type="InterPro" id="IPR016166">
    <property type="entry name" value="FAD-bd_PCMH"/>
</dbReference>
<dbReference type="InterPro" id="IPR036318">
    <property type="entry name" value="FAD-bd_PCMH-like_sf"/>
</dbReference>
<dbReference type="InterPro" id="IPR016169">
    <property type="entry name" value="FAD-bd_PCMH_sub2"/>
</dbReference>
<dbReference type="InterPro" id="IPR050432">
    <property type="entry name" value="FAD-linked_Oxidoreductases_BP"/>
</dbReference>
<dbReference type="InterPro" id="IPR006094">
    <property type="entry name" value="Oxid_FAD_bind_N"/>
</dbReference>
<dbReference type="PANTHER" id="PTHR13878:SF91">
    <property type="entry name" value="FAD BINDING DOMAIN PROTEIN (AFU_ORTHOLOGUE AFUA_6G12070)-RELATED"/>
    <property type="match status" value="1"/>
</dbReference>
<dbReference type="PANTHER" id="PTHR13878">
    <property type="entry name" value="GULONOLACTONE OXIDASE"/>
    <property type="match status" value="1"/>
</dbReference>
<dbReference type="Pfam" id="PF08031">
    <property type="entry name" value="BBE"/>
    <property type="match status" value="1"/>
</dbReference>
<dbReference type="Pfam" id="PF01565">
    <property type="entry name" value="FAD_binding_4"/>
    <property type="match status" value="1"/>
</dbReference>
<dbReference type="SUPFAM" id="SSF56176">
    <property type="entry name" value="FAD-binding/transporter-associated domain-like"/>
    <property type="match status" value="1"/>
</dbReference>
<dbReference type="PROSITE" id="PS51387">
    <property type="entry name" value="FAD_PCMH"/>
    <property type="match status" value="1"/>
</dbReference>
<feature type="signal peptide" evidence="1">
    <location>
        <begin position="1"/>
        <end position="18"/>
    </location>
</feature>
<feature type="chain" id="PRO_5013206725" description="Bifunctional decalin synthase calF">
    <location>
        <begin position="19"/>
        <end position="575"/>
    </location>
</feature>
<feature type="domain" description="FAD-binding PCMH-type" evidence="3">
    <location>
        <begin position="118"/>
        <end position="297"/>
    </location>
</feature>
<feature type="glycosylation site" description="N-linked (GlcNAc...) asparagine" evidence="2">
    <location>
        <position position="46"/>
    </location>
</feature>
<feature type="glycosylation site" description="N-linked (GlcNAc...) asparagine" evidence="2">
    <location>
        <position position="103"/>
    </location>
</feature>
<feature type="glycosylation site" description="N-linked (GlcNAc...) asparagine" evidence="2">
    <location>
        <position position="127"/>
    </location>
</feature>
<feature type="glycosylation site" description="N-linked (GlcNAc...) asparagine" evidence="2">
    <location>
        <position position="175"/>
    </location>
</feature>
<feature type="glycosylation site" description="N-linked (GlcNAc...) asparagine" evidence="2">
    <location>
        <position position="268"/>
    </location>
</feature>
<feature type="glycosylation site" description="N-linked (GlcNAc...) asparagine" evidence="2">
    <location>
        <position position="308"/>
    </location>
</feature>
<feature type="glycosylation site" description="N-linked (GlcNAc...) asparagine" evidence="2">
    <location>
        <position position="359"/>
    </location>
</feature>
<feature type="glycosylation site" description="N-linked (GlcNAc...) asparagine" evidence="2">
    <location>
        <position position="425"/>
    </location>
</feature>
<feature type="glycosylation site" description="N-linked (GlcNAc...) asparagine" evidence="2">
    <location>
        <position position="485"/>
    </location>
</feature>
<protein>
    <recommendedName>
        <fullName evidence="9">Bifunctional decalin synthase calF</fullName>
        <ecNumber evidence="9">1.1.3.-</ecNumber>
        <ecNumber evidence="9">5.5.1.-</ecNumber>
    </recommendedName>
    <alternativeName>
        <fullName evidence="7">Calbistrin biosynthesis cluster protein E</fullName>
    </alternativeName>
    <alternativeName>
        <fullName evidence="9">FAD-dependent monooxygenase calF</fullName>
    </alternativeName>
</protein>
<gene>
    <name evidence="7" type="primary">calF</name>
    <name type="ORF">PENDEC_c013G03789</name>
</gene>
<comment type="function">
    <text evidence="5 9">Bifunctional decaline synthase; part of the gene cluster that mediates the biosynthesis of calbistrin A and related compounds. Calbistrin A is a secondary metabolite with an interesting structure that was recently found to have bioactivity against leukemia cells. It consists of two polyketides linked by an ester bond: a bicyclic decalin containing polyketide and a linear 12 carbon dioic acid structure (PubMed:30598828). The polyketide synthase calA is probably responsible for forming the decalin moiety. Because calA lacks a designated enoylreductase (ER) domain, the required activity is provided by the trans-enoyl reductase calK (PubMed:30598828). Following release from the PKS, calF then probably catalyzes the oxidation and the subsequent Diels Alder cycloisomerization that lead to the formation of the decalin moiety (Probable). The decalin polyketide backbone includes two C-methyl groups, at C7 and C11 in backbone, of which the C7 position is probably methylated by the methyltransferase domain of calA. A candidate for adding the methyl group at C11, if not done by CalA, is the cluster methyltransferase calH (Probable). Several additional tailoring enzymes within the cluster could be involved in the modification of the decalin polyketide product. Those include the 3 cytochrome P450 monooxygenases CalE, CalG and CalL, of which one might be responsible for the introduction of the extra hydroxyl group attached to the backbone of the decalin moiety, at position C9 in the backbone, that allows for attachment of the linear moiety (Probable). One tailoring enzyme activity that is expected to be involved in biosynthesis of calbistrin is an acyltransferase for connecting the two polyketide synthase products, and which could be performed by the cluster acyltransferase calJ (Probable). The enzyme responsible for the biosynthesis of the linear moiety, probably a second PKS, has not been identified yet (Probable).</text>
</comment>
<comment type="pathway">
    <text evidence="9">Secondary metabolite biosynthesis.</text>
</comment>
<comment type="induction">
    <text evidence="5">Expression is induced in complex medium (Czapek yeast autolysate medium) supporting calbistrin production (PubMed:30598828). Expression is positively regulated by the calbistrin biosynthesis cluster-specific transcription factor calC (PubMed:30598828).</text>
</comment>
<comment type="biotechnology">
    <text evidence="4 6">Calbistrin A has been reported to possess a number of interesting bioactivities including antifungal active against Candida albicans and cytotoxic toward both healthy and leukemic human cells.</text>
</comment>
<comment type="similarity">
    <text evidence="8">Belongs to the oxygen-dependent FAD-linked oxidoreductase family.</text>
</comment>
<reference key="1">
    <citation type="journal article" date="2017" name="Nat. Microbiol.">
        <title>Global analysis of biosynthetic gene clusters reveals vast potential of secondary metabolite production in Penicillium species.</title>
        <authorList>
            <person name="Nielsen J.C."/>
            <person name="Grijseels S."/>
            <person name="Prigent S."/>
            <person name="Ji B."/>
            <person name="Dainat J."/>
            <person name="Nielsen K.F."/>
            <person name="Frisvad J.C."/>
            <person name="Workman M."/>
            <person name="Nielsen J."/>
        </authorList>
    </citation>
    <scope>NUCLEOTIDE SEQUENCE [LARGE SCALE GENOMIC DNA]</scope>
    <source>
        <strain>IBT 11843</strain>
    </source>
</reference>
<reference key="2">
    <citation type="journal article" date="1993" name="J. Antibiot.">
        <title>Calbistrins, novel antifungal agents produced by Penicillium restrictum. I. Production, taxonomy of the producing organism and biological activity.</title>
        <authorList>
            <person name="Jackson M."/>
            <person name="Karwowski J.P."/>
            <person name="Humphrey P.E."/>
            <person name="Kohl W.L."/>
            <person name="Barlow G.J."/>
            <person name="Tanaka S.K."/>
        </authorList>
    </citation>
    <scope>BIOTECHNOLOGY</scope>
</reference>
<reference key="3">
    <citation type="journal article" date="2013" name="Molecules">
        <title>Bio-activity and dereplication-based discovery of ophiobolins and other fungal secondary metabolites targeting leukemia cells.</title>
        <authorList>
            <person name="Bladt T.T."/>
            <person name="Duerr C."/>
            <person name="Knudsen P.B."/>
            <person name="Kildgaard S."/>
            <person name="Frisvad J.C."/>
            <person name="Gotfredsen C.H."/>
            <person name="Seiffert M."/>
            <person name="Larsen T.O."/>
        </authorList>
    </citation>
    <scope>BIOTECHNOLOGY</scope>
</reference>
<reference key="4">
    <citation type="journal article" date="2018" name="Fungal Biol. Biotechnol.">
        <title>Identification of the decumbenone biosynthetic gene cluster in Penicillium decumbens and the importance for production of calbistrin.</title>
        <authorList>
            <person name="Grijseels S."/>
            <person name="Pohl C."/>
            <person name="Nielsen J.C."/>
            <person name="Wasil Z."/>
            <person name="Nygaard Y."/>
            <person name="Nielsen J."/>
            <person name="Frisvad J.C."/>
            <person name="Nielsen K.F."/>
            <person name="Workman M."/>
            <person name="Larsen T.O."/>
            <person name="Driessen A.J.M."/>
            <person name="Frandsen R.J.N."/>
        </authorList>
    </citation>
    <scope>IDENTIFICATION</scope>
    <scope>FUNCTION</scope>
    <scope>INDUCTION</scope>
    <scope>PATHWAY</scope>
</reference>